<sequence length="172" mass="18090">MAKMQAKVQADERDDGLREKMISVNRVTKVVKGGRILGFAALTVVGDGDGRIGMGKGKAKEVPVAVQKAMEQARRNMFKVPLKNGTLQHEVHGKHGASAVLLAPAKAGTGVIAGGPMRAVFDVMGVQNVVAKSHGSTNPYNLVRATLDGLRKQSTPADIAAKRGKSVEEILG</sequence>
<proteinExistence type="inferred from homology"/>
<feature type="chain" id="PRO_0000230336" description="Small ribosomal subunit protein uS5">
    <location>
        <begin position="1"/>
        <end position="172"/>
    </location>
</feature>
<feature type="domain" description="S5 DRBM" evidence="1">
    <location>
        <begin position="17"/>
        <end position="80"/>
    </location>
</feature>
<dbReference type="EMBL" id="CP000151">
    <property type="protein sequence ID" value="ABB07066.1"/>
    <property type="molecule type" value="Genomic_DNA"/>
</dbReference>
<dbReference type="RefSeq" id="WP_006482895.1">
    <property type="nucleotide sequence ID" value="NZ_WNDV01000034.1"/>
</dbReference>
<dbReference type="SMR" id="Q39KF0"/>
<dbReference type="GeneID" id="93193434"/>
<dbReference type="KEGG" id="bur:Bcep18194_A3464"/>
<dbReference type="HOGENOM" id="CLU_065898_2_2_4"/>
<dbReference type="Proteomes" id="UP000002705">
    <property type="component" value="Chromosome 1"/>
</dbReference>
<dbReference type="GO" id="GO:0015935">
    <property type="term" value="C:small ribosomal subunit"/>
    <property type="evidence" value="ECO:0007669"/>
    <property type="project" value="InterPro"/>
</dbReference>
<dbReference type="GO" id="GO:0019843">
    <property type="term" value="F:rRNA binding"/>
    <property type="evidence" value="ECO:0007669"/>
    <property type="project" value="UniProtKB-UniRule"/>
</dbReference>
<dbReference type="GO" id="GO:0003735">
    <property type="term" value="F:structural constituent of ribosome"/>
    <property type="evidence" value="ECO:0007669"/>
    <property type="project" value="InterPro"/>
</dbReference>
<dbReference type="GO" id="GO:0006412">
    <property type="term" value="P:translation"/>
    <property type="evidence" value="ECO:0007669"/>
    <property type="project" value="UniProtKB-UniRule"/>
</dbReference>
<dbReference type="FunFam" id="3.30.160.20:FF:000001">
    <property type="entry name" value="30S ribosomal protein S5"/>
    <property type="match status" value="1"/>
</dbReference>
<dbReference type="FunFam" id="3.30.230.10:FF:000002">
    <property type="entry name" value="30S ribosomal protein S5"/>
    <property type="match status" value="1"/>
</dbReference>
<dbReference type="Gene3D" id="3.30.160.20">
    <property type="match status" value="1"/>
</dbReference>
<dbReference type="Gene3D" id="3.30.230.10">
    <property type="match status" value="1"/>
</dbReference>
<dbReference type="HAMAP" id="MF_01307_B">
    <property type="entry name" value="Ribosomal_uS5_B"/>
    <property type="match status" value="1"/>
</dbReference>
<dbReference type="InterPro" id="IPR020568">
    <property type="entry name" value="Ribosomal_Su5_D2-typ_SF"/>
</dbReference>
<dbReference type="InterPro" id="IPR000851">
    <property type="entry name" value="Ribosomal_uS5"/>
</dbReference>
<dbReference type="InterPro" id="IPR005712">
    <property type="entry name" value="Ribosomal_uS5_bac-type"/>
</dbReference>
<dbReference type="InterPro" id="IPR005324">
    <property type="entry name" value="Ribosomal_uS5_C"/>
</dbReference>
<dbReference type="InterPro" id="IPR013810">
    <property type="entry name" value="Ribosomal_uS5_N"/>
</dbReference>
<dbReference type="InterPro" id="IPR018192">
    <property type="entry name" value="Ribosomal_uS5_N_CS"/>
</dbReference>
<dbReference type="InterPro" id="IPR014721">
    <property type="entry name" value="Ribsml_uS5_D2-typ_fold_subgr"/>
</dbReference>
<dbReference type="NCBIfam" id="TIGR01021">
    <property type="entry name" value="rpsE_bact"/>
    <property type="match status" value="1"/>
</dbReference>
<dbReference type="PANTHER" id="PTHR48277">
    <property type="entry name" value="MITOCHONDRIAL RIBOSOMAL PROTEIN S5"/>
    <property type="match status" value="1"/>
</dbReference>
<dbReference type="PANTHER" id="PTHR48277:SF1">
    <property type="entry name" value="MITOCHONDRIAL RIBOSOMAL PROTEIN S5"/>
    <property type="match status" value="1"/>
</dbReference>
<dbReference type="Pfam" id="PF00333">
    <property type="entry name" value="Ribosomal_S5"/>
    <property type="match status" value="1"/>
</dbReference>
<dbReference type="Pfam" id="PF03719">
    <property type="entry name" value="Ribosomal_S5_C"/>
    <property type="match status" value="1"/>
</dbReference>
<dbReference type="SUPFAM" id="SSF54768">
    <property type="entry name" value="dsRNA-binding domain-like"/>
    <property type="match status" value="1"/>
</dbReference>
<dbReference type="SUPFAM" id="SSF54211">
    <property type="entry name" value="Ribosomal protein S5 domain 2-like"/>
    <property type="match status" value="1"/>
</dbReference>
<dbReference type="PROSITE" id="PS00585">
    <property type="entry name" value="RIBOSOMAL_S5"/>
    <property type="match status" value="1"/>
</dbReference>
<dbReference type="PROSITE" id="PS50881">
    <property type="entry name" value="S5_DSRBD"/>
    <property type="match status" value="1"/>
</dbReference>
<evidence type="ECO:0000255" key="1">
    <source>
        <dbReference type="HAMAP-Rule" id="MF_01307"/>
    </source>
</evidence>
<evidence type="ECO:0000305" key="2"/>
<protein>
    <recommendedName>
        <fullName evidence="1">Small ribosomal subunit protein uS5</fullName>
    </recommendedName>
    <alternativeName>
        <fullName evidence="2">30S ribosomal protein S5</fullName>
    </alternativeName>
</protein>
<comment type="function">
    <text evidence="1">With S4 and S12 plays an important role in translational accuracy.</text>
</comment>
<comment type="function">
    <text evidence="1">Located at the back of the 30S subunit body where it stabilizes the conformation of the head with respect to the body.</text>
</comment>
<comment type="subunit">
    <text evidence="1">Part of the 30S ribosomal subunit. Contacts proteins S4 and S8.</text>
</comment>
<comment type="domain">
    <text>The N-terminal domain interacts with the head of the 30S subunit; the C-terminal domain interacts with the body and contacts protein S4. The interaction surface between S4 and S5 is involved in control of translational fidelity.</text>
</comment>
<comment type="similarity">
    <text evidence="1">Belongs to the universal ribosomal protein uS5 family.</text>
</comment>
<name>RS5_BURL3</name>
<accession>Q39KF0</accession>
<reference key="1">
    <citation type="submission" date="2005-10" db="EMBL/GenBank/DDBJ databases">
        <title>Complete sequence of chromosome 1 of Burkholderia sp. 383.</title>
        <authorList>
            <consortium name="US DOE Joint Genome Institute"/>
            <person name="Copeland A."/>
            <person name="Lucas S."/>
            <person name="Lapidus A."/>
            <person name="Barry K."/>
            <person name="Detter J.C."/>
            <person name="Glavina T."/>
            <person name="Hammon N."/>
            <person name="Israni S."/>
            <person name="Pitluck S."/>
            <person name="Chain P."/>
            <person name="Malfatti S."/>
            <person name="Shin M."/>
            <person name="Vergez L."/>
            <person name="Schmutz J."/>
            <person name="Larimer F."/>
            <person name="Land M."/>
            <person name="Kyrpides N."/>
            <person name="Lykidis A."/>
            <person name="Richardson P."/>
        </authorList>
    </citation>
    <scope>NUCLEOTIDE SEQUENCE [LARGE SCALE GENOMIC DNA]</scope>
    <source>
        <strain>ATCC 17760 / DSM 23089 / LMG 22485 / NCIMB 9086 / R18194 / 383</strain>
    </source>
</reference>
<gene>
    <name evidence="1" type="primary">rpsE</name>
    <name type="ordered locus">Bcep18194_A3464</name>
</gene>
<keyword id="KW-0687">Ribonucleoprotein</keyword>
<keyword id="KW-0689">Ribosomal protein</keyword>
<keyword id="KW-0694">RNA-binding</keyword>
<keyword id="KW-0699">rRNA-binding</keyword>
<organism>
    <name type="scientific">Burkholderia lata (strain ATCC 17760 / DSM 23089 / LMG 22485 / NCIMB 9086 / R18194 / 383)</name>
    <dbReference type="NCBI Taxonomy" id="482957"/>
    <lineage>
        <taxon>Bacteria</taxon>
        <taxon>Pseudomonadati</taxon>
        <taxon>Pseudomonadota</taxon>
        <taxon>Betaproteobacteria</taxon>
        <taxon>Burkholderiales</taxon>
        <taxon>Burkholderiaceae</taxon>
        <taxon>Burkholderia</taxon>
        <taxon>Burkholderia cepacia complex</taxon>
    </lineage>
</organism>